<protein>
    <recommendedName>
        <fullName evidence="2">RNA polymerase-associated protein RapA</fullName>
        <ecNumber evidence="2">3.6.4.-</ecNumber>
    </recommendedName>
    <alternativeName>
        <fullName evidence="2">ATP-dependent helicase HepA</fullName>
    </alternativeName>
</protein>
<proteinExistence type="inferred from homology"/>
<reference key="1">
    <citation type="journal article" date="2001" name="Nature">
        <title>Genome sequence of enterohaemorrhagic Escherichia coli O157:H7.</title>
        <authorList>
            <person name="Perna N.T."/>
            <person name="Plunkett G. III"/>
            <person name="Burland V."/>
            <person name="Mau B."/>
            <person name="Glasner J.D."/>
            <person name="Rose D.J."/>
            <person name="Mayhew G.F."/>
            <person name="Evans P.S."/>
            <person name="Gregor J."/>
            <person name="Kirkpatrick H.A."/>
            <person name="Posfai G."/>
            <person name="Hackett J."/>
            <person name="Klink S."/>
            <person name="Boutin A."/>
            <person name="Shao Y."/>
            <person name="Miller L."/>
            <person name="Grotbeck E.J."/>
            <person name="Davis N.W."/>
            <person name="Lim A."/>
            <person name="Dimalanta E.T."/>
            <person name="Potamousis K."/>
            <person name="Apodaca J."/>
            <person name="Anantharaman T.S."/>
            <person name="Lin J."/>
            <person name="Yen G."/>
            <person name="Schwartz D.C."/>
            <person name="Welch R.A."/>
            <person name="Blattner F.R."/>
        </authorList>
    </citation>
    <scope>NUCLEOTIDE SEQUENCE [LARGE SCALE GENOMIC DNA]</scope>
    <source>
        <strain>O157:H7 / EDL933 / ATCC 700927 / EHEC</strain>
    </source>
</reference>
<reference key="2">
    <citation type="journal article" date="2001" name="DNA Res.">
        <title>Complete genome sequence of enterohemorrhagic Escherichia coli O157:H7 and genomic comparison with a laboratory strain K-12.</title>
        <authorList>
            <person name="Hayashi T."/>
            <person name="Makino K."/>
            <person name="Ohnishi M."/>
            <person name="Kurokawa K."/>
            <person name="Ishii K."/>
            <person name="Yokoyama K."/>
            <person name="Han C.-G."/>
            <person name="Ohtsubo E."/>
            <person name="Nakayama K."/>
            <person name="Murata T."/>
            <person name="Tanaka M."/>
            <person name="Tobe T."/>
            <person name="Iida T."/>
            <person name="Takami H."/>
            <person name="Honda T."/>
            <person name="Sasakawa C."/>
            <person name="Ogasawara N."/>
            <person name="Yasunaga T."/>
            <person name="Kuhara S."/>
            <person name="Shiba T."/>
            <person name="Hattori M."/>
            <person name="Shinagawa H."/>
        </authorList>
    </citation>
    <scope>NUCLEOTIDE SEQUENCE [LARGE SCALE GENOMIC DNA]</scope>
    <source>
        <strain>O157:H7 / Sakai / RIMD 0509952 / EHEC</strain>
    </source>
</reference>
<keyword id="KW-0010">Activator</keyword>
<keyword id="KW-0067">ATP-binding</keyword>
<keyword id="KW-0238">DNA-binding</keyword>
<keyword id="KW-0347">Helicase</keyword>
<keyword id="KW-0378">Hydrolase</keyword>
<keyword id="KW-0547">Nucleotide-binding</keyword>
<keyword id="KW-1185">Reference proteome</keyword>
<keyword id="KW-0804">Transcription</keyword>
<keyword id="KW-0805">Transcription regulation</keyword>
<feature type="initiator methionine" description="Removed" evidence="1">
    <location>
        <position position="1"/>
    </location>
</feature>
<feature type="chain" id="PRO_0000207173" description="RNA polymerase-associated protein RapA">
    <location>
        <begin position="2"/>
        <end position="968"/>
    </location>
</feature>
<feature type="domain" description="Helicase ATP-binding" evidence="2">
    <location>
        <begin position="164"/>
        <end position="334"/>
    </location>
</feature>
<feature type="domain" description="Helicase C-terminal" evidence="2">
    <location>
        <begin position="490"/>
        <end position="662"/>
    </location>
</feature>
<feature type="short sequence motif" description="DEAH box">
    <location>
        <begin position="280"/>
        <end position="283"/>
    </location>
</feature>
<feature type="binding site" evidence="2">
    <location>
        <begin position="177"/>
        <end position="184"/>
    </location>
    <ligand>
        <name>ATP</name>
        <dbReference type="ChEBI" id="CHEBI:30616"/>
    </ligand>
</feature>
<comment type="function">
    <text evidence="2">Transcription regulator that activates transcription by stimulating RNA polymerase (RNAP) recycling in case of stress conditions such as supercoiled DNA or high salt concentrations. Probably acts by releasing the RNAP, when it is trapped or immobilized on tightly supercoiled DNA. Does not activate transcription on linear DNA. Probably not involved in DNA repair.</text>
</comment>
<comment type="subunit">
    <text evidence="2">Interacts with the RNAP. Has a higher affinity for the core RNAP than for the holoenzyme. Its ATPase activity is stimulated by binding to RNAP.</text>
</comment>
<comment type="similarity">
    <text evidence="2">Belongs to the SNF2/RAD54 helicase family. RapA subfamily.</text>
</comment>
<dbReference type="EC" id="3.6.4.-" evidence="2"/>
<dbReference type="EMBL" id="AE005174">
    <property type="protein sequence ID" value="AAG54363.1"/>
    <property type="molecule type" value="Genomic_DNA"/>
</dbReference>
<dbReference type="EMBL" id="BA000007">
    <property type="protein sequence ID" value="BAB33486.1"/>
    <property type="molecule type" value="Genomic_DNA"/>
</dbReference>
<dbReference type="PIR" id="G85487">
    <property type="entry name" value="G85487"/>
</dbReference>
<dbReference type="PIR" id="G90636">
    <property type="entry name" value="G90636"/>
</dbReference>
<dbReference type="RefSeq" id="NP_308090.1">
    <property type="nucleotide sequence ID" value="NC_002695.1"/>
</dbReference>
<dbReference type="RefSeq" id="WP_001117011.1">
    <property type="nucleotide sequence ID" value="NZ_VOAI01000002.1"/>
</dbReference>
<dbReference type="SMR" id="P60241"/>
<dbReference type="STRING" id="155864.Z0067"/>
<dbReference type="GeneID" id="75202125"/>
<dbReference type="GeneID" id="913463"/>
<dbReference type="KEGG" id="ece:Z0067"/>
<dbReference type="KEGG" id="ecs:ECs_0063"/>
<dbReference type="PATRIC" id="fig|386585.9.peg.162"/>
<dbReference type="eggNOG" id="COG0553">
    <property type="taxonomic scope" value="Bacteria"/>
</dbReference>
<dbReference type="HOGENOM" id="CLU_011520_0_0_6"/>
<dbReference type="OMA" id="MSILERD"/>
<dbReference type="Proteomes" id="UP000000558">
    <property type="component" value="Chromosome"/>
</dbReference>
<dbReference type="Proteomes" id="UP000002519">
    <property type="component" value="Chromosome"/>
</dbReference>
<dbReference type="GO" id="GO:0005524">
    <property type="term" value="F:ATP binding"/>
    <property type="evidence" value="ECO:0007669"/>
    <property type="project" value="UniProtKB-UniRule"/>
</dbReference>
<dbReference type="GO" id="GO:0003677">
    <property type="term" value="F:DNA binding"/>
    <property type="evidence" value="ECO:0007669"/>
    <property type="project" value="UniProtKB-KW"/>
</dbReference>
<dbReference type="GO" id="GO:0004386">
    <property type="term" value="F:helicase activity"/>
    <property type="evidence" value="ECO:0007669"/>
    <property type="project" value="UniProtKB-UniRule"/>
</dbReference>
<dbReference type="GO" id="GO:0016817">
    <property type="term" value="F:hydrolase activity, acting on acid anhydrides"/>
    <property type="evidence" value="ECO:0007669"/>
    <property type="project" value="InterPro"/>
</dbReference>
<dbReference type="GO" id="GO:0006355">
    <property type="term" value="P:regulation of DNA-templated transcription"/>
    <property type="evidence" value="ECO:0007669"/>
    <property type="project" value="UniProtKB-UniRule"/>
</dbReference>
<dbReference type="CDD" id="cd18011">
    <property type="entry name" value="DEXDc_RapA"/>
    <property type="match status" value="1"/>
</dbReference>
<dbReference type="CDD" id="cd18793">
    <property type="entry name" value="SF2_C_SNF"/>
    <property type="match status" value="1"/>
</dbReference>
<dbReference type="FunFam" id="2.30.30.140:FF:000020">
    <property type="entry name" value="RNA polymerase-associated protein RapA"/>
    <property type="match status" value="1"/>
</dbReference>
<dbReference type="FunFam" id="2.30.30.930:FF:000001">
    <property type="entry name" value="RNA polymerase-associated protein RapA"/>
    <property type="match status" value="1"/>
</dbReference>
<dbReference type="FunFam" id="3.30.360.80:FF:000001">
    <property type="entry name" value="RNA polymerase-associated protein RapA"/>
    <property type="match status" value="1"/>
</dbReference>
<dbReference type="FunFam" id="3.40.50.10810:FF:000012">
    <property type="entry name" value="RNA polymerase-associated protein RapA"/>
    <property type="match status" value="1"/>
</dbReference>
<dbReference type="FunFam" id="3.40.50.300:FF:000350">
    <property type="entry name" value="RNA polymerase-associated protein RapA"/>
    <property type="match status" value="1"/>
</dbReference>
<dbReference type="Gene3D" id="2.30.30.140">
    <property type="match status" value="1"/>
</dbReference>
<dbReference type="Gene3D" id="2.30.30.930">
    <property type="match status" value="1"/>
</dbReference>
<dbReference type="Gene3D" id="3.30.360.80">
    <property type="match status" value="1"/>
</dbReference>
<dbReference type="Gene3D" id="6.10.140.1500">
    <property type="match status" value="1"/>
</dbReference>
<dbReference type="Gene3D" id="6.10.140.2230">
    <property type="match status" value="1"/>
</dbReference>
<dbReference type="Gene3D" id="3.40.50.300">
    <property type="entry name" value="P-loop containing nucleotide triphosphate hydrolases"/>
    <property type="match status" value="1"/>
</dbReference>
<dbReference type="Gene3D" id="3.40.50.10810">
    <property type="entry name" value="Tandem AAA-ATPase domain"/>
    <property type="match status" value="1"/>
</dbReference>
<dbReference type="HAMAP" id="MF_01821">
    <property type="entry name" value="Helicase_RapA"/>
    <property type="match status" value="1"/>
</dbReference>
<dbReference type="InterPro" id="IPR014001">
    <property type="entry name" value="Helicase_ATP-bd"/>
</dbReference>
<dbReference type="InterPro" id="IPR001650">
    <property type="entry name" value="Helicase_C-like"/>
</dbReference>
<dbReference type="InterPro" id="IPR023949">
    <property type="entry name" value="Helicase_RapA"/>
</dbReference>
<dbReference type="InterPro" id="IPR027417">
    <property type="entry name" value="P-loop_NTPase"/>
</dbReference>
<dbReference type="InterPro" id="IPR022737">
    <property type="entry name" value="RapA_C"/>
</dbReference>
<dbReference type="InterPro" id="IPR038718">
    <property type="entry name" value="SNF2-like_sf"/>
</dbReference>
<dbReference type="InterPro" id="IPR049730">
    <property type="entry name" value="SNF2/RAD54-like_C"/>
</dbReference>
<dbReference type="InterPro" id="IPR000330">
    <property type="entry name" value="SNF2_N"/>
</dbReference>
<dbReference type="InterPro" id="IPR040765">
    <property type="entry name" value="Tudor_1_RapA"/>
</dbReference>
<dbReference type="InterPro" id="IPR040766">
    <property type="entry name" value="Tudor_2_RapA"/>
</dbReference>
<dbReference type="NCBIfam" id="NF003426">
    <property type="entry name" value="PRK04914.1"/>
    <property type="match status" value="1"/>
</dbReference>
<dbReference type="PANTHER" id="PTHR45766">
    <property type="entry name" value="DNA ANNEALING HELICASE AND ENDONUCLEASE ZRANB3 FAMILY MEMBER"/>
    <property type="match status" value="1"/>
</dbReference>
<dbReference type="PANTHER" id="PTHR45766:SF6">
    <property type="entry name" value="SWI_SNF-RELATED MATRIX-ASSOCIATED ACTIN-DEPENDENT REGULATOR OF CHROMATIN SUBFAMILY A-LIKE PROTEIN 1"/>
    <property type="match status" value="1"/>
</dbReference>
<dbReference type="Pfam" id="PF00271">
    <property type="entry name" value="Helicase_C"/>
    <property type="match status" value="1"/>
</dbReference>
<dbReference type="Pfam" id="PF12137">
    <property type="entry name" value="RapA_C"/>
    <property type="match status" value="1"/>
</dbReference>
<dbReference type="Pfam" id="PF00176">
    <property type="entry name" value="SNF2-rel_dom"/>
    <property type="match status" value="1"/>
</dbReference>
<dbReference type="Pfam" id="PF18339">
    <property type="entry name" value="Tudor_1_RapA"/>
    <property type="match status" value="1"/>
</dbReference>
<dbReference type="Pfam" id="PF18337">
    <property type="entry name" value="Tudor_RapA"/>
    <property type="match status" value="1"/>
</dbReference>
<dbReference type="SMART" id="SM00487">
    <property type="entry name" value="DEXDc"/>
    <property type="match status" value="1"/>
</dbReference>
<dbReference type="SMART" id="SM00490">
    <property type="entry name" value="HELICc"/>
    <property type="match status" value="1"/>
</dbReference>
<dbReference type="SUPFAM" id="SSF52540">
    <property type="entry name" value="P-loop containing nucleoside triphosphate hydrolases"/>
    <property type="match status" value="2"/>
</dbReference>
<dbReference type="PROSITE" id="PS51192">
    <property type="entry name" value="HELICASE_ATP_BIND_1"/>
    <property type="match status" value="1"/>
</dbReference>
<dbReference type="PROSITE" id="PS51194">
    <property type="entry name" value="HELICASE_CTER"/>
    <property type="match status" value="1"/>
</dbReference>
<accession>P60241</accession>
<accession>P23852</accession>
<accession>P75633</accession>
<sequence length="968" mass="109769">MPFTLGQRWISDTESELGLGTVVAVDARTVTLLFPSTGENRLYARSDSPVTRVMFNPGDTITSHDGWQMQVEEVKEENGLLTYIGTRLDTEESGVALREVFLDSKLVFSKPQDRLFAGQIDRMDRFALRYRARKYSSEQFRMPYSGLRGQRTSLIPHQLNIAHDVGRRHAPRVLLADEVGLGKTIEAGMILHQQLLSGAAERVLIIVPETLQHQWLVEMLRRFNLRFALFDDERYAEAQHDAYNPFDTEQLVICSLDFARRSKQRLEHLCEAEWDLLVVDEAHHLVWSEDAPSREYQAIEQLAEHVPGVLLLTATPEQLGMESHFARLRLLDPNRFHDFAQFVEEQKNYRPVADAVAMLLAGNKLSNDELNMLGEMIGEQDIEPLLQAANSDSEDAQSARQELVSMLMDRHGTSRVLFRNTRNGVKGFPKRELHTIKLPLPTQYQTAIKVSGIMGARKSAEDRARDMLYPERIYQEFEGDNATWWNFDPRVEWLMGYLTSHRSQKVLVICAKAATALQLEQVLREREGIRAAVFHEGMSIIERDRAAAWFAEEDTGAQVLLCSEIGSEGRNFQFASHMVMFDLPFNPDLLEQRIGRLDRIGQAHDIQIHVPYLEKTAQSVLVRWYHEGLDAFEHTCPTGRTIYDSVYNDLINYLASPDQTEGFDDLIKNCREQHEALKAQLEQGRDRLLEIHSNGGEKAQALAESIEEQDDDTNLIAFAMNLFDIIGINQDDRGDNMIVLTPSDHMLVPDFPGLSEDGITITFDREVALAREDAQFITWEHPLIRNGLDLILSGDTGSSTISLLKNKALPVGTLLVELIYVVEAQAPKQLQLNRFLPPTPVRMLLDKNGNNLAAQVEFETFNRQLNAVNRHTGSKLVNAVQQDVHAILQLGEAQIEKSARALIDAARNEADEKLSAELSRLEALRAVNPNIRDDELTAIESNRQQVMESLDQAGWRLDALRLIVVTHQ</sequence>
<gene>
    <name evidence="2" type="primary">rapA</name>
    <name type="synonym">hepA</name>
    <name type="ordered locus">Z0067</name>
    <name type="ordered locus">ECs0063</name>
</gene>
<evidence type="ECO:0000250" key="1"/>
<evidence type="ECO:0000255" key="2">
    <source>
        <dbReference type="HAMAP-Rule" id="MF_01821"/>
    </source>
</evidence>
<name>RAPA_ECO57</name>
<organism>
    <name type="scientific">Escherichia coli O157:H7</name>
    <dbReference type="NCBI Taxonomy" id="83334"/>
    <lineage>
        <taxon>Bacteria</taxon>
        <taxon>Pseudomonadati</taxon>
        <taxon>Pseudomonadota</taxon>
        <taxon>Gammaproteobacteria</taxon>
        <taxon>Enterobacterales</taxon>
        <taxon>Enterobacteriaceae</taxon>
        <taxon>Escherichia</taxon>
    </lineage>
</organism>